<comment type="subcellular location">
    <subcellularLocation>
        <location evidence="1">Cytoplasm</location>
    </subcellularLocation>
</comment>
<comment type="similarity">
    <text evidence="4">Belongs to the OCA5 family.</text>
</comment>
<sequence length="716" mass="81933">MLQTSKGSNSSSTSSSRSASISTATPNTIVEDEELLCDPKSELTPPAVANPLRPVSKSNTSVEDDSKPSFTYDLDVFNLCKEYLNTRNHHGLALIARQKGIPPILRFKVWPILLKSHPFVISPFIQPDSELLNESTSSRSNSSSSSTGSNTPLSTAPGSIKDAAIIDGDANDNDNDSNSNSNDDDNDRDDNDANTKEKEEDERNNKIREKIKRDLAKYIQRLKYSQSKYTVSETEHEILSILENAIMKFTLKWGKIIKYDSSLTWIALNLAEWFPPIPKTPWVLVGKEYSSSHQSLIVNFLDDYSNYIDNIPDLREYLERLIYHDEKISTISFREVYERLVLVLLHCPQPVSRRKKSDNQGSNQRRNQSEVQKDQQSFKVNKTTLPKTGGTIEERVSYFIYCLRKLIPELSQYFHEEQILTKFGCLDDEWLIWWLKFCGTKVWSKYDRGRIWDFMLGWRLKNPKRDFNYYYEKLNYVNRNTLEKLGPDIFWSVGNEEEDISGDNNVDANANEINNTEKTETGKLVKREGDIKRSSFKDLVNELSNELHISKRVSTDEVATSTSSPATTKMASSSSTSSTLTPNVSIPFSRVDPHVALIFISLSLLKSKENILVELDQHEIRQFLSRLPSKSYKYNQKRSTRQKRTSYASNASSTSNSPMGQSPVDRDEDSIFPTSRIVISNDSKDQKHKVNFIDNIISEAGELWRKWLWSEMVEDN</sequence>
<accession>Q5ADS3</accession>
<accession>A0A1D8PKP9</accession>
<feature type="chain" id="PRO_0000408206" description="Oxidant-induced cell-cycle arrest protein 5">
    <location>
        <begin position="1"/>
        <end position="716"/>
    </location>
</feature>
<feature type="domain" description="Rab-GAP TBC" evidence="2">
    <location>
        <begin position="100"/>
        <end position="459"/>
    </location>
</feature>
<feature type="region of interest" description="Disordered" evidence="3">
    <location>
        <begin position="1"/>
        <end position="66"/>
    </location>
</feature>
<feature type="region of interest" description="Disordered" evidence="3">
    <location>
        <begin position="132"/>
        <end position="205"/>
    </location>
</feature>
<feature type="region of interest" description="Disordered" evidence="3">
    <location>
        <begin position="352"/>
        <end position="376"/>
    </location>
</feature>
<feature type="region of interest" description="Disordered" evidence="3">
    <location>
        <begin position="502"/>
        <end position="521"/>
    </location>
</feature>
<feature type="region of interest" description="Disordered" evidence="3">
    <location>
        <begin position="554"/>
        <end position="582"/>
    </location>
</feature>
<feature type="region of interest" description="Disordered" evidence="3">
    <location>
        <begin position="634"/>
        <end position="669"/>
    </location>
</feature>
<feature type="compositionally biased region" description="Low complexity" evidence="3">
    <location>
        <begin position="1"/>
        <end position="25"/>
    </location>
</feature>
<feature type="compositionally biased region" description="Low complexity" evidence="3">
    <location>
        <begin position="132"/>
        <end position="168"/>
    </location>
</feature>
<feature type="compositionally biased region" description="Basic and acidic residues" evidence="3">
    <location>
        <begin position="191"/>
        <end position="205"/>
    </location>
</feature>
<feature type="compositionally biased region" description="Low complexity" evidence="3">
    <location>
        <begin position="503"/>
        <end position="514"/>
    </location>
</feature>
<feature type="compositionally biased region" description="Low complexity" evidence="3">
    <location>
        <begin position="559"/>
        <end position="581"/>
    </location>
</feature>
<feature type="compositionally biased region" description="Basic residues" evidence="3">
    <location>
        <begin position="635"/>
        <end position="644"/>
    </location>
</feature>
<feature type="compositionally biased region" description="Low complexity" evidence="3">
    <location>
        <begin position="645"/>
        <end position="657"/>
    </location>
</feature>
<name>OCA5_CANAL</name>
<organism>
    <name type="scientific">Candida albicans (strain SC5314 / ATCC MYA-2876)</name>
    <name type="common">Yeast</name>
    <dbReference type="NCBI Taxonomy" id="237561"/>
    <lineage>
        <taxon>Eukaryota</taxon>
        <taxon>Fungi</taxon>
        <taxon>Dikarya</taxon>
        <taxon>Ascomycota</taxon>
        <taxon>Saccharomycotina</taxon>
        <taxon>Pichiomycetes</taxon>
        <taxon>Debaryomycetaceae</taxon>
        <taxon>Candida/Lodderomyces clade</taxon>
        <taxon>Candida</taxon>
    </lineage>
</organism>
<gene>
    <name type="primary">OCA5</name>
    <name type="ordered locus">CAALFM_C307290WA</name>
    <name type="ORF">CaO19.14061</name>
    <name type="ORF">CaO19.6769</name>
</gene>
<proteinExistence type="inferred from homology"/>
<keyword id="KW-0963">Cytoplasm</keyword>
<keyword id="KW-1185">Reference proteome</keyword>
<dbReference type="EMBL" id="CP017625">
    <property type="protein sequence ID" value="AOW28731.1"/>
    <property type="molecule type" value="Genomic_DNA"/>
</dbReference>
<dbReference type="RefSeq" id="XP_719865.1">
    <property type="nucleotide sequence ID" value="XM_714772.1"/>
</dbReference>
<dbReference type="SMR" id="Q5ADS3"/>
<dbReference type="FunCoup" id="Q5ADS3">
    <property type="interactions" value="45"/>
</dbReference>
<dbReference type="STRING" id="237561.Q5ADS3"/>
<dbReference type="EnsemblFungi" id="C3_07290W_A-T">
    <property type="protein sequence ID" value="C3_07290W_A-T-p1"/>
    <property type="gene ID" value="C3_07290W_A"/>
</dbReference>
<dbReference type="GeneID" id="3638430"/>
<dbReference type="KEGG" id="cal:CAALFM_C307290WA"/>
<dbReference type="CGD" id="CAL0000188408">
    <property type="gene designation" value="orf19.14061"/>
</dbReference>
<dbReference type="VEuPathDB" id="FungiDB:C3_07290W_A"/>
<dbReference type="eggNOG" id="ENOG502QVXN">
    <property type="taxonomic scope" value="Eukaryota"/>
</dbReference>
<dbReference type="HOGENOM" id="CLU_028817_0_0_1"/>
<dbReference type="InParanoid" id="Q5ADS3"/>
<dbReference type="OMA" id="LRFKVWP"/>
<dbReference type="OrthoDB" id="27140at2759"/>
<dbReference type="PRO" id="PR:Q5ADS3"/>
<dbReference type="Proteomes" id="UP000000559">
    <property type="component" value="Chromosome 3"/>
</dbReference>
<dbReference type="GO" id="GO:0005737">
    <property type="term" value="C:cytoplasm"/>
    <property type="evidence" value="ECO:0007669"/>
    <property type="project" value="UniProtKB-SubCell"/>
</dbReference>
<dbReference type="Gene3D" id="1.10.472.80">
    <property type="entry name" value="Ypt/Rab-GAP domain of gyp1p, domain 3"/>
    <property type="match status" value="1"/>
</dbReference>
<dbReference type="InterPro" id="IPR000195">
    <property type="entry name" value="Rab-GAP-TBC_dom"/>
</dbReference>
<dbReference type="InterPro" id="IPR035969">
    <property type="entry name" value="Rab-GAP_TBC_sf"/>
</dbReference>
<dbReference type="SMART" id="SM00164">
    <property type="entry name" value="TBC"/>
    <property type="match status" value="1"/>
</dbReference>
<dbReference type="SUPFAM" id="SSF47923">
    <property type="entry name" value="Ypt/Rab-GAP domain of gyp1p"/>
    <property type="match status" value="1"/>
</dbReference>
<dbReference type="PROSITE" id="PS50086">
    <property type="entry name" value="TBC_RABGAP"/>
    <property type="match status" value="1"/>
</dbReference>
<protein>
    <recommendedName>
        <fullName>Oxidant-induced cell-cycle arrest protein 5</fullName>
    </recommendedName>
</protein>
<evidence type="ECO:0000250" key="1"/>
<evidence type="ECO:0000255" key="2">
    <source>
        <dbReference type="PROSITE-ProRule" id="PRU00163"/>
    </source>
</evidence>
<evidence type="ECO:0000256" key="3">
    <source>
        <dbReference type="SAM" id="MobiDB-lite"/>
    </source>
</evidence>
<evidence type="ECO:0000305" key="4"/>
<reference key="1">
    <citation type="journal article" date="2004" name="Proc. Natl. Acad. Sci. U.S.A.">
        <title>The diploid genome sequence of Candida albicans.</title>
        <authorList>
            <person name="Jones T."/>
            <person name="Federspiel N.A."/>
            <person name="Chibana H."/>
            <person name="Dungan J."/>
            <person name="Kalman S."/>
            <person name="Magee B.B."/>
            <person name="Newport G."/>
            <person name="Thorstenson Y.R."/>
            <person name="Agabian N."/>
            <person name="Magee P.T."/>
            <person name="Davis R.W."/>
            <person name="Scherer S."/>
        </authorList>
    </citation>
    <scope>NUCLEOTIDE SEQUENCE [LARGE SCALE GENOMIC DNA]</scope>
    <source>
        <strain>SC5314 / ATCC MYA-2876</strain>
    </source>
</reference>
<reference key="2">
    <citation type="journal article" date="2007" name="Genome Biol.">
        <title>Assembly of the Candida albicans genome into sixteen supercontigs aligned on the eight chromosomes.</title>
        <authorList>
            <person name="van het Hoog M."/>
            <person name="Rast T.J."/>
            <person name="Martchenko M."/>
            <person name="Grindle S."/>
            <person name="Dignard D."/>
            <person name="Hogues H."/>
            <person name="Cuomo C."/>
            <person name="Berriman M."/>
            <person name="Scherer S."/>
            <person name="Magee B.B."/>
            <person name="Whiteway M."/>
            <person name="Chibana H."/>
            <person name="Nantel A."/>
            <person name="Magee P.T."/>
        </authorList>
    </citation>
    <scope>GENOME REANNOTATION</scope>
    <source>
        <strain>SC5314 / ATCC MYA-2876</strain>
    </source>
</reference>
<reference key="3">
    <citation type="journal article" date="2013" name="Genome Biol.">
        <title>Assembly of a phased diploid Candida albicans genome facilitates allele-specific measurements and provides a simple model for repeat and indel structure.</title>
        <authorList>
            <person name="Muzzey D."/>
            <person name="Schwartz K."/>
            <person name="Weissman J.S."/>
            <person name="Sherlock G."/>
        </authorList>
    </citation>
    <scope>NUCLEOTIDE SEQUENCE [LARGE SCALE GENOMIC DNA]</scope>
    <scope>GENOME REANNOTATION</scope>
    <source>
        <strain>SC5314 / ATCC MYA-2876</strain>
    </source>
</reference>